<organism>
    <name type="scientific">Salmonella newport (strain SL254)</name>
    <dbReference type="NCBI Taxonomy" id="423368"/>
    <lineage>
        <taxon>Bacteria</taxon>
        <taxon>Pseudomonadati</taxon>
        <taxon>Pseudomonadota</taxon>
        <taxon>Gammaproteobacteria</taxon>
        <taxon>Enterobacterales</taxon>
        <taxon>Enterobacteriaceae</taxon>
        <taxon>Salmonella</taxon>
    </lineage>
</organism>
<proteinExistence type="inferred from homology"/>
<evidence type="ECO:0000255" key="1">
    <source>
        <dbReference type="HAMAP-Rule" id="MF_00472"/>
    </source>
</evidence>
<gene>
    <name evidence="1" type="primary">ubiG</name>
    <name type="ordered locus">SNSL254_A2461</name>
</gene>
<feature type="chain" id="PRO_1000199700" description="Ubiquinone biosynthesis O-methyltransferase">
    <location>
        <begin position="1"/>
        <end position="242"/>
    </location>
</feature>
<feature type="binding site" evidence="1">
    <location>
        <position position="44"/>
    </location>
    <ligand>
        <name>S-adenosyl-L-methionine</name>
        <dbReference type="ChEBI" id="CHEBI:59789"/>
    </ligand>
</feature>
<feature type="binding site" evidence="1">
    <location>
        <position position="64"/>
    </location>
    <ligand>
        <name>S-adenosyl-L-methionine</name>
        <dbReference type="ChEBI" id="CHEBI:59789"/>
    </ligand>
</feature>
<feature type="binding site" evidence="1">
    <location>
        <position position="85"/>
    </location>
    <ligand>
        <name>S-adenosyl-L-methionine</name>
        <dbReference type="ChEBI" id="CHEBI:59789"/>
    </ligand>
</feature>
<feature type="binding site" evidence="1">
    <location>
        <position position="129"/>
    </location>
    <ligand>
        <name>S-adenosyl-L-methionine</name>
        <dbReference type="ChEBI" id="CHEBI:59789"/>
    </ligand>
</feature>
<protein>
    <recommendedName>
        <fullName evidence="1">Ubiquinone biosynthesis O-methyltransferase</fullName>
    </recommendedName>
    <alternativeName>
        <fullName evidence="1">2-polyprenyl-6-hydroxyphenol methylase</fullName>
        <ecNumber evidence="1">2.1.1.222</ecNumber>
    </alternativeName>
    <alternativeName>
        <fullName evidence="1">3-demethylubiquinone 3-O-methyltransferase</fullName>
        <ecNumber evidence="1">2.1.1.64</ecNumber>
    </alternativeName>
</protein>
<name>UBIG_SALNS</name>
<sequence length="242" mass="26854">MNTEKPSVAHNVDHNEIAKFEAVASRWWDLEGEFKPLHRINPLRLGYITERSGGLFGKKVLDVGCGGGILAESMAREGATVTGLDMGFEPLQVAKLHALESGIEVEYVQETVEEHAAKHAQQYDVVTCMEMLEHVPDPQSVVHACAQLVKPGGEVFFSTLNRNGKSWLMAVVGAEYILRMVPKGTHDVKKFIKPAELLSWVDETVLKEQHITGLHYNPITNTFKLGPGVDVNYMLHTRAKKA</sequence>
<keyword id="KW-0489">Methyltransferase</keyword>
<keyword id="KW-0949">S-adenosyl-L-methionine</keyword>
<keyword id="KW-0808">Transferase</keyword>
<keyword id="KW-0831">Ubiquinone biosynthesis</keyword>
<comment type="function">
    <text evidence="1">O-methyltransferase that catalyzes the 2 O-methylation steps in the ubiquinone biosynthetic pathway.</text>
</comment>
<comment type="catalytic activity">
    <reaction evidence="1">
        <text>a 3-demethylubiquinol + S-adenosyl-L-methionine = a ubiquinol + S-adenosyl-L-homocysteine + H(+)</text>
        <dbReference type="Rhea" id="RHEA:44380"/>
        <dbReference type="Rhea" id="RHEA-COMP:9566"/>
        <dbReference type="Rhea" id="RHEA-COMP:10914"/>
        <dbReference type="ChEBI" id="CHEBI:15378"/>
        <dbReference type="ChEBI" id="CHEBI:17976"/>
        <dbReference type="ChEBI" id="CHEBI:57856"/>
        <dbReference type="ChEBI" id="CHEBI:59789"/>
        <dbReference type="ChEBI" id="CHEBI:84422"/>
        <dbReference type="EC" id="2.1.1.64"/>
    </reaction>
</comment>
<comment type="catalytic activity">
    <reaction evidence="1">
        <text>a 3-(all-trans-polyprenyl)benzene-1,2-diol + S-adenosyl-L-methionine = a 2-methoxy-6-(all-trans-polyprenyl)phenol + S-adenosyl-L-homocysteine + H(+)</text>
        <dbReference type="Rhea" id="RHEA:31411"/>
        <dbReference type="Rhea" id="RHEA-COMP:9550"/>
        <dbReference type="Rhea" id="RHEA-COMP:9551"/>
        <dbReference type="ChEBI" id="CHEBI:15378"/>
        <dbReference type="ChEBI" id="CHEBI:57856"/>
        <dbReference type="ChEBI" id="CHEBI:59789"/>
        <dbReference type="ChEBI" id="CHEBI:62729"/>
        <dbReference type="ChEBI" id="CHEBI:62731"/>
        <dbReference type="EC" id="2.1.1.222"/>
    </reaction>
</comment>
<comment type="pathway">
    <text evidence="1">Cofactor biosynthesis; ubiquinone biosynthesis.</text>
</comment>
<comment type="similarity">
    <text evidence="1">Belongs to the methyltransferase superfamily. UbiG/COQ3 family.</text>
</comment>
<reference key="1">
    <citation type="journal article" date="2011" name="J. Bacteriol.">
        <title>Comparative genomics of 28 Salmonella enterica isolates: evidence for CRISPR-mediated adaptive sublineage evolution.</title>
        <authorList>
            <person name="Fricke W.F."/>
            <person name="Mammel M.K."/>
            <person name="McDermott P.F."/>
            <person name="Tartera C."/>
            <person name="White D.G."/>
            <person name="Leclerc J.E."/>
            <person name="Ravel J."/>
            <person name="Cebula T.A."/>
        </authorList>
    </citation>
    <scope>NUCLEOTIDE SEQUENCE [LARGE SCALE GENOMIC DNA]</scope>
    <source>
        <strain>SL254</strain>
    </source>
</reference>
<dbReference type="EC" id="2.1.1.222" evidence="1"/>
<dbReference type="EC" id="2.1.1.64" evidence="1"/>
<dbReference type="EMBL" id="CP001113">
    <property type="protein sequence ID" value="ACF62294.1"/>
    <property type="molecule type" value="Genomic_DNA"/>
</dbReference>
<dbReference type="RefSeq" id="WP_001091009.1">
    <property type="nucleotide sequence ID" value="NZ_CCMR01000001.1"/>
</dbReference>
<dbReference type="SMR" id="B4SYU8"/>
<dbReference type="KEGG" id="see:SNSL254_A2461"/>
<dbReference type="HOGENOM" id="CLU_042432_5_0_6"/>
<dbReference type="UniPathway" id="UPA00232"/>
<dbReference type="Proteomes" id="UP000008824">
    <property type="component" value="Chromosome"/>
</dbReference>
<dbReference type="GO" id="GO:0102208">
    <property type="term" value="F:2-polyprenyl-6-hydroxyphenol methylase activity"/>
    <property type="evidence" value="ECO:0007669"/>
    <property type="project" value="UniProtKB-EC"/>
</dbReference>
<dbReference type="GO" id="GO:0061542">
    <property type="term" value="F:3-demethylubiquinol 3-O-methyltransferase activity"/>
    <property type="evidence" value="ECO:0007669"/>
    <property type="project" value="UniProtKB-UniRule"/>
</dbReference>
<dbReference type="GO" id="GO:0010420">
    <property type="term" value="F:polyprenyldihydroxybenzoate methyltransferase activity"/>
    <property type="evidence" value="ECO:0007669"/>
    <property type="project" value="InterPro"/>
</dbReference>
<dbReference type="GO" id="GO:0032259">
    <property type="term" value="P:methylation"/>
    <property type="evidence" value="ECO:0007669"/>
    <property type="project" value="UniProtKB-KW"/>
</dbReference>
<dbReference type="CDD" id="cd02440">
    <property type="entry name" value="AdoMet_MTases"/>
    <property type="match status" value="1"/>
</dbReference>
<dbReference type="FunFam" id="3.40.50.150:FF:000028">
    <property type="entry name" value="Ubiquinone biosynthesis O-methyltransferase"/>
    <property type="match status" value="1"/>
</dbReference>
<dbReference type="Gene3D" id="3.40.50.150">
    <property type="entry name" value="Vaccinia Virus protein VP39"/>
    <property type="match status" value="1"/>
</dbReference>
<dbReference type="HAMAP" id="MF_00472">
    <property type="entry name" value="UbiG"/>
    <property type="match status" value="1"/>
</dbReference>
<dbReference type="InterPro" id="IPR029063">
    <property type="entry name" value="SAM-dependent_MTases_sf"/>
</dbReference>
<dbReference type="InterPro" id="IPR010233">
    <property type="entry name" value="UbiG_MeTrfase"/>
</dbReference>
<dbReference type="NCBIfam" id="TIGR01983">
    <property type="entry name" value="UbiG"/>
    <property type="match status" value="1"/>
</dbReference>
<dbReference type="PANTHER" id="PTHR43464">
    <property type="entry name" value="METHYLTRANSFERASE"/>
    <property type="match status" value="1"/>
</dbReference>
<dbReference type="PANTHER" id="PTHR43464:SF19">
    <property type="entry name" value="UBIQUINONE BIOSYNTHESIS O-METHYLTRANSFERASE, MITOCHONDRIAL"/>
    <property type="match status" value="1"/>
</dbReference>
<dbReference type="Pfam" id="PF13489">
    <property type="entry name" value="Methyltransf_23"/>
    <property type="match status" value="1"/>
</dbReference>
<dbReference type="SUPFAM" id="SSF53335">
    <property type="entry name" value="S-adenosyl-L-methionine-dependent methyltransferases"/>
    <property type="match status" value="1"/>
</dbReference>
<accession>B4SYU8</accession>